<reference key="1">
    <citation type="journal article" date="2004" name="Nature">
        <title>Genome evolution in yeasts.</title>
        <authorList>
            <person name="Dujon B."/>
            <person name="Sherman D."/>
            <person name="Fischer G."/>
            <person name="Durrens P."/>
            <person name="Casaregola S."/>
            <person name="Lafontaine I."/>
            <person name="de Montigny J."/>
            <person name="Marck C."/>
            <person name="Neuveglise C."/>
            <person name="Talla E."/>
            <person name="Goffard N."/>
            <person name="Frangeul L."/>
            <person name="Aigle M."/>
            <person name="Anthouard V."/>
            <person name="Babour A."/>
            <person name="Barbe V."/>
            <person name="Barnay S."/>
            <person name="Blanchin S."/>
            <person name="Beckerich J.-M."/>
            <person name="Beyne E."/>
            <person name="Bleykasten C."/>
            <person name="Boisrame A."/>
            <person name="Boyer J."/>
            <person name="Cattolico L."/>
            <person name="Confanioleri F."/>
            <person name="de Daruvar A."/>
            <person name="Despons L."/>
            <person name="Fabre E."/>
            <person name="Fairhead C."/>
            <person name="Ferry-Dumazet H."/>
            <person name="Groppi A."/>
            <person name="Hantraye F."/>
            <person name="Hennequin C."/>
            <person name="Jauniaux N."/>
            <person name="Joyet P."/>
            <person name="Kachouri R."/>
            <person name="Kerrest A."/>
            <person name="Koszul R."/>
            <person name="Lemaire M."/>
            <person name="Lesur I."/>
            <person name="Ma L."/>
            <person name="Muller H."/>
            <person name="Nicaud J.-M."/>
            <person name="Nikolski M."/>
            <person name="Oztas S."/>
            <person name="Ozier-Kalogeropoulos O."/>
            <person name="Pellenz S."/>
            <person name="Potier S."/>
            <person name="Richard G.-F."/>
            <person name="Straub M.-L."/>
            <person name="Suleau A."/>
            <person name="Swennen D."/>
            <person name="Tekaia F."/>
            <person name="Wesolowski-Louvel M."/>
            <person name="Westhof E."/>
            <person name="Wirth B."/>
            <person name="Zeniou-Meyer M."/>
            <person name="Zivanovic Y."/>
            <person name="Bolotin-Fukuhara M."/>
            <person name="Thierry A."/>
            <person name="Bouchier C."/>
            <person name="Caudron B."/>
            <person name="Scarpelli C."/>
            <person name="Gaillardin C."/>
            <person name="Weissenbach J."/>
            <person name="Wincker P."/>
            <person name="Souciet J.-L."/>
        </authorList>
    </citation>
    <scope>NUCLEOTIDE SEQUENCE [LARGE SCALE GENOMIC DNA]</scope>
    <source>
        <strain>ATCC 8585 / CBS 2359 / DSM 70799 / NBRC 1267 / NRRL Y-1140 / WM37</strain>
    </source>
</reference>
<dbReference type="EMBL" id="CR382122">
    <property type="protein sequence ID" value="CAH02175.1"/>
    <property type="molecule type" value="Genomic_DNA"/>
</dbReference>
<dbReference type="RefSeq" id="XP_451782.1">
    <property type="nucleotide sequence ID" value="XM_451782.1"/>
</dbReference>
<dbReference type="SMR" id="Q6CWA7"/>
<dbReference type="FunCoup" id="Q6CWA7">
    <property type="interactions" value="117"/>
</dbReference>
<dbReference type="STRING" id="284590.Q6CWA7"/>
<dbReference type="PaxDb" id="284590-Q6CWA7"/>
<dbReference type="KEGG" id="kla:KLLA0_B05533g"/>
<dbReference type="eggNOG" id="ENOG502RZQ0">
    <property type="taxonomic scope" value="Eukaryota"/>
</dbReference>
<dbReference type="HOGENOM" id="CLU_051067_0_0_1"/>
<dbReference type="InParanoid" id="Q6CWA7"/>
<dbReference type="OMA" id="DLCRIND"/>
<dbReference type="Proteomes" id="UP000000598">
    <property type="component" value="Chromosome B"/>
</dbReference>
<dbReference type="GO" id="GO:0005737">
    <property type="term" value="C:cytoplasm"/>
    <property type="evidence" value="ECO:0007669"/>
    <property type="project" value="UniProtKB-SubCell"/>
</dbReference>
<dbReference type="GO" id="GO:0016020">
    <property type="term" value="C:membrane"/>
    <property type="evidence" value="ECO:0007669"/>
    <property type="project" value="UniProtKB-SubCell"/>
</dbReference>
<dbReference type="GO" id="GO:0006914">
    <property type="term" value="P:autophagy"/>
    <property type="evidence" value="ECO:0007669"/>
    <property type="project" value="UniProtKB-KW"/>
</dbReference>
<dbReference type="GO" id="GO:0015031">
    <property type="term" value="P:protein transport"/>
    <property type="evidence" value="ECO:0007669"/>
    <property type="project" value="UniProtKB-KW"/>
</dbReference>
<gene>
    <name type="primary">ATG23</name>
    <name type="ordered locus">KLLA0B05533g</name>
</gene>
<name>ATG23_KLULA</name>
<feature type="chain" id="PRO_0000064726" description="Autophagy-related protein 23">
    <location>
        <begin position="1"/>
        <end position="426"/>
    </location>
</feature>
<feature type="coiled-coil region" evidence="2">
    <location>
        <begin position="64"/>
        <end position="101"/>
    </location>
</feature>
<feature type="coiled-coil region" evidence="2">
    <location>
        <begin position="165"/>
        <end position="230"/>
    </location>
</feature>
<accession>Q6CWA7</accession>
<comment type="function">
    <text evidence="1">Required for cytoplasm to vacuole transport (Cvt) vesicle formation and efficient autophagy. Plays a role in ATG protein retrieval from the pre-autophagosomal structure (PAS) and is especially required for autophagy-dependent cycling of ATG9. Also plays a role in regulation of filamentous growth (By similarity).</text>
</comment>
<comment type="subcellular location">
    <subcellularLocation>
        <location evidence="1">Cytoplasm</location>
    </subcellularLocation>
    <subcellularLocation>
        <location evidence="1">Membrane</location>
        <topology evidence="1">Peripheral membrane protein</topology>
    </subcellularLocation>
</comment>
<comment type="similarity">
    <text evidence="3">Belongs to the ATG23 family.</text>
</comment>
<evidence type="ECO:0000250" key="1"/>
<evidence type="ECO:0000255" key="2"/>
<evidence type="ECO:0000305" key="3"/>
<organism>
    <name type="scientific">Kluyveromyces lactis (strain ATCC 8585 / CBS 2359 / DSM 70799 / NBRC 1267 / NRRL Y-1140 / WM37)</name>
    <name type="common">Yeast</name>
    <name type="synonym">Candida sphaerica</name>
    <dbReference type="NCBI Taxonomy" id="284590"/>
    <lineage>
        <taxon>Eukaryota</taxon>
        <taxon>Fungi</taxon>
        <taxon>Dikarya</taxon>
        <taxon>Ascomycota</taxon>
        <taxon>Saccharomycotina</taxon>
        <taxon>Saccharomycetes</taxon>
        <taxon>Saccharomycetales</taxon>
        <taxon>Saccharomycetaceae</taxon>
        <taxon>Kluyveromyces</taxon>
    </lineage>
</organism>
<keyword id="KW-0072">Autophagy</keyword>
<keyword id="KW-0175">Coiled coil</keyword>
<keyword id="KW-0963">Cytoplasm</keyword>
<keyword id="KW-0472">Membrane</keyword>
<keyword id="KW-0653">Protein transport</keyword>
<keyword id="KW-1185">Reference proteome</keyword>
<keyword id="KW-0813">Transport</keyword>
<sequence length="426" mass="49037">MDLNDLLLQQQEVTNLLSNLQEAHKRILISNEDENNDLNKIRKDILICLNDLKTVNSLIIDPRDGLIKKNLHKLEKYEQELRSLESEEAAIESNLNQWKIDQDPENVRRKENWGTVPINLVGNHQYLLESYVNEVGIENTTLANTNGNHEETPNSSKFTREQLLRNARKLKLCQEQVNSEIDQLKSLISQYERDRNVINDEYNRTTELIQKEVNTLSREEDKINSQREKILKKLGLLKDHEQNQPRNFFFSLGALARVDNSDFKIALSQAYEFIDAKKQALKKILHENKSQTMSLEHNFSIWNDVIRSIQGLETNLQQSFIEKEGNVPKTDITSMISRTLSRVNSIVGTYSKDSIFTSILCELKALQKALDELNGKMQPIPIKSSAKTPELLQMGKSPPKVALSKEYASNLHESTEDFPLKINKTD</sequence>
<proteinExistence type="inferred from homology"/>
<protein>
    <recommendedName>
        <fullName>Autophagy-related protein 23</fullName>
    </recommendedName>
</protein>